<sequence length="175" mass="18217">MASPRHILLINGPNLNLLGTREPQIYGSTTLHDIEQAAQTQASSLGLRLSTFQSNHEGAIIDRIHQAAGFSPSLSPSGAAAATTTEAGAGPGTGVDKLSAIIINPGAYTHTSVGIRDALLGTGIPFVEVHVSNVHAREAFRHHSYLSDKAAAVICGLGPFGYSAALEFAGRHMKL</sequence>
<accession>D1ZR99</accession>
<accession>F7VM60</accession>
<evidence type="ECO:0000255" key="1">
    <source>
        <dbReference type="HAMAP-Rule" id="MF_03136"/>
    </source>
</evidence>
<evidence type="ECO:0000305" key="2"/>
<dbReference type="EC" id="4.2.1.10" evidence="1"/>
<dbReference type="EMBL" id="CABT02000001">
    <property type="protein sequence ID" value="CCC06588.1"/>
    <property type="status" value="ALT_INIT"/>
    <property type="molecule type" value="Genomic_DNA"/>
</dbReference>
<dbReference type="RefSeq" id="XP_003345112.1">
    <property type="nucleotide sequence ID" value="XM_003345064.1"/>
</dbReference>
<dbReference type="SMR" id="D1ZR99"/>
<dbReference type="STRING" id="771870.D1ZR99"/>
<dbReference type="GeneID" id="10802438"/>
<dbReference type="KEGG" id="smp:10802438"/>
<dbReference type="VEuPathDB" id="FungiDB:SMAC_07401"/>
<dbReference type="eggNOG" id="ENOG502S1A9">
    <property type="taxonomic scope" value="Eukaryota"/>
</dbReference>
<dbReference type="HOGENOM" id="CLU_090968_1_0_1"/>
<dbReference type="InParanoid" id="D1ZR99"/>
<dbReference type="OrthoDB" id="8191625at2759"/>
<dbReference type="UniPathway" id="UPA00088">
    <property type="reaction ID" value="UER00178"/>
</dbReference>
<dbReference type="Proteomes" id="UP000001881">
    <property type="component" value="Unassembled WGS sequence"/>
</dbReference>
<dbReference type="GO" id="GO:0003855">
    <property type="term" value="F:3-dehydroquinate dehydratase activity"/>
    <property type="evidence" value="ECO:0007669"/>
    <property type="project" value="UniProtKB-UniRule"/>
</dbReference>
<dbReference type="GO" id="GO:0046279">
    <property type="term" value="P:3,4-dihydroxybenzoate biosynthetic process"/>
    <property type="evidence" value="ECO:0007669"/>
    <property type="project" value="UniProtKB-UniRule"/>
</dbReference>
<dbReference type="GO" id="GO:0019631">
    <property type="term" value="P:quinate catabolic process"/>
    <property type="evidence" value="ECO:0007669"/>
    <property type="project" value="TreeGrafter"/>
</dbReference>
<dbReference type="CDD" id="cd00466">
    <property type="entry name" value="DHQase_II"/>
    <property type="match status" value="1"/>
</dbReference>
<dbReference type="Gene3D" id="3.40.50.9100">
    <property type="entry name" value="Dehydroquinase, class II"/>
    <property type="match status" value="1"/>
</dbReference>
<dbReference type="HAMAP" id="MF_00169">
    <property type="entry name" value="AroQ"/>
    <property type="match status" value="1"/>
</dbReference>
<dbReference type="InterPro" id="IPR001874">
    <property type="entry name" value="DHquinase_II"/>
</dbReference>
<dbReference type="InterPro" id="IPR018509">
    <property type="entry name" value="DHquinase_II_CS"/>
</dbReference>
<dbReference type="InterPro" id="IPR036441">
    <property type="entry name" value="DHquinase_II_sf"/>
</dbReference>
<dbReference type="PANTHER" id="PTHR21272">
    <property type="entry name" value="CATABOLIC 3-DEHYDROQUINASE"/>
    <property type="match status" value="1"/>
</dbReference>
<dbReference type="PANTHER" id="PTHR21272:SF5">
    <property type="entry name" value="CATABOLIC 3-DEHYDROQUINASE"/>
    <property type="match status" value="1"/>
</dbReference>
<dbReference type="Pfam" id="PF01220">
    <property type="entry name" value="DHquinase_II"/>
    <property type="match status" value="1"/>
</dbReference>
<dbReference type="PIRSF" id="PIRSF001399">
    <property type="entry name" value="DHquinase_II"/>
    <property type="match status" value="1"/>
</dbReference>
<dbReference type="SUPFAM" id="SSF52304">
    <property type="entry name" value="Type II 3-dehydroquinate dehydratase"/>
    <property type="match status" value="1"/>
</dbReference>
<dbReference type="PROSITE" id="PS01029">
    <property type="entry name" value="DEHYDROQUINASE_II"/>
    <property type="match status" value="1"/>
</dbReference>
<protein>
    <recommendedName>
        <fullName evidence="1">Catabolic 3-dehydroquinase</fullName>
        <shortName evidence="1">cDHQase</shortName>
        <ecNumber evidence="1">4.2.1.10</ecNumber>
    </recommendedName>
    <alternativeName>
        <fullName evidence="1">3-dehydroquinate dehydratase</fullName>
    </alternativeName>
</protein>
<proteinExistence type="inferred from homology"/>
<reference key="1">
    <citation type="journal article" date="2010" name="PLoS Genet.">
        <title>De novo assembly of a 40 Mb eukaryotic genome from short sequence reads: Sordaria macrospora, a model organism for fungal morphogenesis.</title>
        <authorList>
            <person name="Nowrousian M."/>
            <person name="Stajich J.E."/>
            <person name="Chu M."/>
            <person name="Engh I."/>
            <person name="Espagne E."/>
            <person name="Halliday K."/>
            <person name="Kamerewerd J."/>
            <person name="Kempken F."/>
            <person name="Knab B."/>
            <person name="Kuo H.-C."/>
            <person name="Osiewacz H.D."/>
            <person name="Poeggeler S."/>
            <person name="Read N.D."/>
            <person name="Seiler S."/>
            <person name="Smith K.M."/>
            <person name="Zickler D."/>
            <person name="Kueck U."/>
            <person name="Freitag M."/>
        </authorList>
    </citation>
    <scope>NUCLEOTIDE SEQUENCE [LARGE SCALE GENOMIC DNA]</scope>
    <source>
        <strain>ATCC MYA-333 / DSM 997 / K(L3346) / K-hell</strain>
    </source>
</reference>
<organism>
    <name type="scientific">Sordaria macrospora (strain ATCC MYA-333 / DSM 997 / K(L3346) / K-hell)</name>
    <dbReference type="NCBI Taxonomy" id="771870"/>
    <lineage>
        <taxon>Eukaryota</taxon>
        <taxon>Fungi</taxon>
        <taxon>Dikarya</taxon>
        <taxon>Ascomycota</taxon>
        <taxon>Pezizomycotina</taxon>
        <taxon>Sordariomycetes</taxon>
        <taxon>Sordariomycetidae</taxon>
        <taxon>Sordariales</taxon>
        <taxon>Sordariaceae</taxon>
        <taxon>Sordaria</taxon>
    </lineage>
</organism>
<keyword id="KW-0456">Lyase</keyword>
<keyword id="KW-0672">Quinate metabolism</keyword>
<keyword id="KW-1185">Reference proteome</keyword>
<comment type="function">
    <text evidence="1">Is involved in the catabolism of quinate. Allows the utilization of quinate as carbon source via the beta-ketoadipate pathway.</text>
</comment>
<comment type="catalytic activity">
    <reaction evidence="1">
        <text>3-dehydroquinate = 3-dehydroshikimate + H2O</text>
        <dbReference type="Rhea" id="RHEA:21096"/>
        <dbReference type="ChEBI" id="CHEBI:15377"/>
        <dbReference type="ChEBI" id="CHEBI:16630"/>
        <dbReference type="ChEBI" id="CHEBI:32364"/>
        <dbReference type="EC" id="4.2.1.10"/>
    </reaction>
</comment>
<comment type="pathway">
    <text evidence="1">Aromatic compound metabolism; 3,4-dihydroxybenzoate biosynthesis; 3,4-dihydroxybenzoate from 3-dehydroquinate: step 1/2.</text>
</comment>
<comment type="subunit">
    <text evidence="1">Homododecamer. Adopts a ring-like structure, composed of an arrangement of two hexameric rings stacked on top of one another.</text>
</comment>
<comment type="similarity">
    <text evidence="1">Belongs to the type-II 3-dehydroquinase family.</text>
</comment>
<comment type="sequence caution" evidence="2">
    <conflict type="erroneous initiation">
        <sequence resource="EMBL-CDS" id="CCC06588"/>
    </conflict>
    <text>Extended N-terminus.</text>
</comment>
<gene>
    <name evidence="1" type="primary">qutE</name>
    <name type="ORF">SMAC_07401</name>
</gene>
<name>3DHQ_SORMK</name>
<feature type="chain" id="PRO_0000402379" description="Catabolic 3-dehydroquinase">
    <location>
        <begin position="1"/>
        <end position="175"/>
    </location>
</feature>
<feature type="active site" description="Proton acceptor" evidence="1">
    <location>
        <position position="26"/>
    </location>
</feature>
<feature type="active site" description="Proton donor" evidence="1">
    <location>
        <position position="130"/>
    </location>
</feature>
<feature type="binding site" evidence="1">
    <location>
        <position position="104"/>
    </location>
    <ligand>
        <name>substrate</name>
    </ligand>
</feature>
<feature type="binding site" evidence="1">
    <location>
        <position position="110"/>
    </location>
    <ligand>
        <name>substrate</name>
    </ligand>
</feature>
<feature type="binding site" evidence="1">
    <location>
        <position position="117"/>
    </location>
    <ligand>
        <name>substrate</name>
    </ligand>
</feature>
<feature type="binding site" evidence="1">
    <location>
        <begin position="131"/>
        <end position="132"/>
    </location>
    <ligand>
        <name>substrate</name>
    </ligand>
</feature>
<feature type="binding site" evidence="1">
    <location>
        <position position="141"/>
    </location>
    <ligand>
        <name>substrate</name>
    </ligand>
</feature>
<feature type="site" description="Transition state stabilizer" evidence="1">
    <location>
        <position position="21"/>
    </location>
</feature>